<organism>
    <name type="scientific">Picosynechococcus sp. (strain ATCC 27264 / PCC 7002 / PR-6)</name>
    <name type="common">Agmenellum quadruplicatum</name>
    <dbReference type="NCBI Taxonomy" id="32049"/>
    <lineage>
        <taxon>Bacteria</taxon>
        <taxon>Bacillati</taxon>
        <taxon>Cyanobacteriota</taxon>
        <taxon>Cyanophyceae</taxon>
        <taxon>Oscillatoriophycideae</taxon>
        <taxon>Chroococcales</taxon>
        <taxon>Geminocystaceae</taxon>
        <taxon>Picosynechococcus</taxon>
    </lineage>
</organism>
<name>SFSA_PICP2</name>
<accession>B1XPQ9</accession>
<protein>
    <recommendedName>
        <fullName evidence="1">Sugar fermentation stimulation protein homolog</fullName>
    </recommendedName>
</protein>
<gene>
    <name evidence="1" type="primary">sfsA</name>
    <name type="ordered locus">SYNPCC7002_A1785</name>
</gene>
<evidence type="ECO:0000255" key="1">
    <source>
        <dbReference type="HAMAP-Rule" id="MF_00095"/>
    </source>
</evidence>
<dbReference type="EMBL" id="CP000951">
    <property type="protein sequence ID" value="ACA99773.1"/>
    <property type="molecule type" value="Genomic_DNA"/>
</dbReference>
<dbReference type="RefSeq" id="WP_012307396.1">
    <property type="nucleotide sequence ID" value="NZ_JAHHPU010000002.1"/>
</dbReference>
<dbReference type="SMR" id="B1XPQ9"/>
<dbReference type="STRING" id="32049.SYNPCC7002_A1785"/>
<dbReference type="KEGG" id="syp:SYNPCC7002_A1785"/>
<dbReference type="eggNOG" id="COG1489">
    <property type="taxonomic scope" value="Bacteria"/>
</dbReference>
<dbReference type="HOGENOM" id="CLU_052299_2_0_3"/>
<dbReference type="Proteomes" id="UP000001688">
    <property type="component" value="Chromosome"/>
</dbReference>
<dbReference type="GO" id="GO:0003677">
    <property type="term" value="F:DNA binding"/>
    <property type="evidence" value="ECO:0007669"/>
    <property type="project" value="InterPro"/>
</dbReference>
<dbReference type="CDD" id="cd22359">
    <property type="entry name" value="SfsA-like_bacterial"/>
    <property type="match status" value="1"/>
</dbReference>
<dbReference type="Gene3D" id="2.40.50.580">
    <property type="match status" value="1"/>
</dbReference>
<dbReference type="Gene3D" id="3.40.1350.60">
    <property type="match status" value="1"/>
</dbReference>
<dbReference type="HAMAP" id="MF_00095">
    <property type="entry name" value="SfsA"/>
    <property type="match status" value="1"/>
</dbReference>
<dbReference type="InterPro" id="IPR005224">
    <property type="entry name" value="SfsA"/>
</dbReference>
<dbReference type="InterPro" id="IPR040452">
    <property type="entry name" value="SfsA_C"/>
</dbReference>
<dbReference type="InterPro" id="IPR041465">
    <property type="entry name" value="SfsA_N"/>
</dbReference>
<dbReference type="NCBIfam" id="TIGR00230">
    <property type="entry name" value="sfsA"/>
    <property type="match status" value="1"/>
</dbReference>
<dbReference type="PANTHER" id="PTHR30545">
    <property type="entry name" value="SUGAR FERMENTATION STIMULATION PROTEIN A"/>
    <property type="match status" value="1"/>
</dbReference>
<dbReference type="PANTHER" id="PTHR30545:SF2">
    <property type="entry name" value="SUGAR FERMENTATION STIMULATION PROTEIN A"/>
    <property type="match status" value="1"/>
</dbReference>
<dbReference type="Pfam" id="PF03749">
    <property type="entry name" value="SfsA"/>
    <property type="match status" value="1"/>
</dbReference>
<dbReference type="Pfam" id="PF17746">
    <property type="entry name" value="SfsA_N"/>
    <property type="match status" value="1"/>
</dbReference>
<reference key="1">
    <citation type="submission" date="2008-02" db="EMBL/GenBank/DDBJ databases">
        <title>Complete sequence of Synechococcus sp. PCC 7002.</title>
        <authorList>
            <person name="Li T."/>
            <person name="Zhao J."/>
            <person name="Zhao C."/>
            <person name="Liu Z."/>
            <person name="Zhao F."/>
            <person name="Marquardt J."/>
            <person name="Nomura C.T."/>
            <person name="Persson S."/>
            <person name="Detter J.C."/>
            <person name="Richardson P.M."/>
            <person name="Lanz C."/>
            <person name="Schuster S.C."/>
            <person name="Wang J."/>
            <person name="Li S."/>
            <person name="Huang X."/>
            <person name="Cai T."/>
            <person name="Yu Z."/>
            <person name="Luo J."/>
            <person name="Zhao J."/>
            <person name="Bryant D.A."/>
        </authorList>
    </citation>
    <scope>NUCLEOTIDE SEQUENCE [LARGE SCALE GENOMIC DNA]</scope>
    <source>
        <strain>ATCC 27264 / PCC 7002 / PR-6</strain>
    </source>
</reference>
<keyword id="KW-1185">Reference proteome</keyword>
<comment type="similarity">
    <text evidence="1">Belongs to the SfsA family.</text>
</comment>
<feature type="chain" id="PRO_0000340153" description="Sugar fermentation stimulation protein homolog">
    <location>
        <begin position="1"/>
        <end position="252"/>
    </location>
</feature>
<proteinExistence type="inferred from homology"/>
<sequence length="252" mass="28015">MTATTQPFVYRYPGLIPGILRKRYKRFLADIELASGEIVTAHCPNTGPMTGICELGAPVMLSKSDNPKRKLAYTWEMIQLPTPEPTWIGVNTALPNRVIKAMLLAKQIPELADHYDTVRPEVRYGTENKSRIDFLLTGEGRSPLYVEVKNTTWTKGKLALFPDTETTRGQKHLQELIDIVPAAKAVMLYFINRGDCTRFAPGDSKDPKYGELFRQAIAAGIQILPCRFAVSPEGICYLGLAPWESTEISGVG</sequence>